<feature type="chain" id="PRO_1000186649" description="7-cyano-7-deazaguanine synthase">
    <location>
        <begin position="1"/>
        <end position="232"/>
    </location>
</feature>
<feature type="binding site" evidence="1">
    <location>
        <begin position="8"/>
        <end position="18"/>
    </location>
    <ligand>
        <name>ATP</name>
        <dbReference type="ChEBI" id="CHEBI:30616"/>
    </ligand>
</feature>
<feature type="binding site" evidence="1">
    <location>
        <position position="189"/>
    </location>
    <ligand>
        <name>Zn(2+)</name>
        <dbReference type="ChEBI" id="CHEBI:29105"/>
    </ligand>
</feature>
<feature type="binding site" evidence="1">
    <location>
        <position position="198"/>
    </location>
    <ligand>
        <name>Zn(2+)</name>
        <dbReference type="ChEBI" id="CHEBI:29105"/>
    </ligand>
</feature>
<feature type="binding site" evidence="1">
    <location>
        <position position="201"/>
    </location>
    <ligand>
        <name>Zn(2+)</name>
        <dbReference type="ChEBI" id="CHEBI:29105"/>
    </ligand>
</feature>
<feature type="binding site" evidence="1">
    <location>
        <position position="204"/>
    </location>
    <ligand>
        <name>Zn(2+)</name>
        <dbReference type="ChEBI" id="CHEBI:29105"/>
    </ligand>
</feature>
<dbReference type="EC" id="6.3.4.20" evidence="1"/>
<dbReference type="EMBL" id="CP000901">
    <property type="protein sequence ID" value="ABX85764.1"/>
    <property type="molecule type" value="Genomic_DNA"/>
</dbReference>
<dbReference type="RefSeq" id="WP_002208635.1">
    <property type="nucleotide sequence ID" value="NZ_CP009935.1"/>
</dbReference>
<dbReference type="SMR" id="A9QZP5"/>
<dbReference type="GeneID" id="57975561"/>
<dbReference type="KEGG" id="ypg:YpAngola_A3046"/>
<dbReference type="PATRIC" id="fig|349746.12.peg.4100"/>
<dbReference type="UniPathway" id="UPA00391"/>
<dbReference type="GO" id="GO:0005524">
    <property type="term" value="F:ATP binding"/>
    <property type="evidence" value="ECO:0007669"/>
    <property type="project" value="UniProtKB-UniRule"/>
</dbReference>
<dbReference type="GO" id="GO:0016879">
    <property type="term" value="F:ligase activity, forming carbon-nitrogen bonds"/>
    <property type="evidence" value="ECO:0007669"/>
    <property type="project" value="UniProtKB-UniRule"/>
</dbReference>
<dbReference type="GO" id="GO:0008270">
    <property type="term" value="F:zinc ion binding"/>
    <property type="evidence" value="ECO:0007669"/>
    <property type="project" value="UniProtKB-UniRule"/>
</dbReference>
<dbReference type="GO" id="GO:0008616">
    <property type="term" value="P:queuosine biosynthetic process"/>
    <property type="evidence" value="ECO:0007669"/>
    <property type="project" value="UniProtKB-UniRule"/>
</dbReference>
<dbReference type="CDD" id="cd01995">
    <property type="entry name" value="QueC-like"/>
    <property type="match status" value="1"/>
</dbReference>
<dbReference type="FunFam" id="3.40.50.620:FF:000017">
    <property type="entry name" value="7-cyano-7-deazaguanine synthase"/>
    <property type="match status" value="1"/>
</dbReference>
<dbReference type="Gene3D" id="3.40.50.620">
    <property type="entry name" value="HUPs"/>
    <property type="match status" value="1"/>
</dbReference>
<dbReference type="HAMAP" id="MF_01633">
    <property type="entry name" value="QueC"/>
    <property type="match status" value="1"/>
</dbReference>
<dbReference type="InterPro" id="IPR018317">
    <property type="entry name" value="QueC"/>
</dbReference>
<dbReference type="InterPro" id="IPR014729">
    <property type="entry name" value="Rossmann-like_a/b/a_fold"/>
</dbReference>
<dbReference type="NCBIfam" id="TIGR00364">
    <property type="entry name" value="7-cyano-7-deazaguanine synthase QueC"/>
    <property type="match status" value="1"/>
</dbReference>
<dbReference type="NCBIfam" id="NF008317">
    <property type="entry name" value="PRK11106.1"/>
    <property type="match status" value="1"/>
</dbReference>
<dbReference type="PANTHER" id="PTHR42914">
    <property type="entry name" value="7-CYANO-7-DEAZAGUANINE SYNTHASE"/>
    <property type="match status" value="1"/>
</dbReference>
<dbReference type="PANTHER" id="PTHR42914:SF1">
    <property type="entry name" value="7-CYANO-7-DEAZAGUANINE SYNTHASE"/>
    <property type="match status" value="1"/>
</dbReference>
<dbReference type="Pfam" id="PF06508">
    <property type="entry name" value="QueC"/>
    <property type="match status" value="1"/>
</dbReference>
<dbReference type="PIRSF" id="PIRSF006293">
    <property type="entry name" value="ExsB"/>
    <property type="match status" value="1"/>
</dbReference>
<dbReference type="SUPFAM" id="SSF52402">
    <property type="entry name" value="Adenine nucleotide alpha hydrolases-like"/>
    <property type="match status" value="1"/>
</dbReference>
<evidence type="ECO:0000255" key="1">
    <source>
        <dbReference type="HAMAP-Rule" id="MF_01633"/>
    </source>
</evidence>
<reference key="1">
    <citation type="journal article" date="2010" name="J. Bacteriol.">
        <title>Genome sequence of the deep-rooted Yersinia pestis strain Angola reveals new insights into the evolution and pangenome of the plague bacterium.</title>
        <authorList>
            <person name="Eppinger M."/>
            <person name="Worsham P.L."/>
            <person name="Nikolich M.P."/>
            <person name="Riley D.R."/>
            <person name="Sebastian Y."/>
            <person name="Mou S."/>
            <person name="Achtman M."/>
            <person name="Lindler L.E."/>
            <person name="Ravel J."/>
        </authorList>
    </citation>
    <scope>NUCLEOTIDE SEQUENCE [LARGE SCALE GENOMIC DNA]</scope>
    <source>
        <strain>Angola</strain>
    </source>
</reference>
<comment type="function">
    <text evidence="1">Catalyzes the ATP-dependent conversion of 7-carboxy-7-deazaguanine (CDG) to 7-cyano-7-deazaguanine (preQ(0)).</text>
</comment>
<comment type="catalytic activity">
    <reaction evidence="1">
        <text>7-carboxy-7-deazaguanine + NH4(+) + ATP = 7-cyano-7-deazaguanine + ADP + phosphate + H2O + H(+)</text>
        <dbReference type="Rhea" id="RHEA:27982"/>
        <dbReference type="ChEBI" id="CHEBI:15377"/>
        <dbReference type="ChEBI" id="CHEBI:15378"/>
        <dbReference type="ChEBI" id="CHEBI:28938"/>
        <dbReference type="ChEBI" id="CHEBI:30616"/>
        <dbReference type="ChEBI" id="CHEBI:43474"/>
        <dbReference type="ChEBI" id="CHEBI:45075"/>
        <dbReference type="ChEBI" id="CHEBI:61036"/>
        <dbReference type="ChEBI" id="CHEBI:456216"/>
        <dbReference type="EC" id="6.3.4.20"/>
    </reaction>
</comment>
<comment type="cofactor">
    <cofactor evidence="1">
        <name>Zn(2+)</name>
        <dbReference type="ChEBI" id="CHEBI:29105"/>
    </cofactor>
    <text evidence="1">Binds 1 zinc ion per subunit.</text>
</comment>
<comment type="pathway">
    <text evidence="1">Purine metabolism; 7-cyano-7-deazaguanine biosynthesis.</text>
</comment>
<comment type="similarity">
    <text evidence="1">Belongs to the QueC family.</text>
</comment>
<keyword id="KW-0067">ATP-binding</keyword>
<keyword id="KW-0436">Ligase</keyword>
<keyword id="KW-0479">Metal-binding</keyword>
<keyword id="KW-0547">Nucleotide-binding</keyword>
<keyword id="KW-0671">Queuosine biosynthesis</keyword>
<keyword id="KW-0862">Zinc</keyword>
<name>QUEC_YERPG</name>
<proteinExistence type="inferred from homology"/>
<accession>A9QZP5</accession>
<protein>
    <recommendedName>
        <fullName evidence="1">7-cyano-7-deazaguanine synthase</fullName>
        <ecNumber evidence="1">6.3.4.20</ecNumber>
    </recommendedName>
    <alternativeName>
        <fullName evidence="1">7-cyano-7-carbaguanine synthase</fullName>
    </alternativeName>
    <alternativeName>
        <fullName evidence="1">PreQ(0) synthase</fullName>
    </alternativeName>
    <alternativeName>
        <fullName evidence="1">Queuosine biosynthesis protein QueC</fullName>
    </alternativeName>
</protein>
<gene>
    <name evidence="1" type="primary">queC</name>
    <name type="ordered locus">YpAngola_A3046</name>
</gene>
<sequence>MKRAVVVFSGGQDSTTCLIQALQQYDEVHCITFDYGQRHRTEIDVARELALQLGATAHKVLDVGMLNELAVSSLTRDSIPVPSYDANADGALPSTFVPGRNILFLTLASIYAYQVQAQAVITGVCETDFSGYPDCRDEFIKALNHAIDLGIGRDIAFITPLMWLDKAETWALADYYQQLDLIRHHTLTCYNGIKGDGCGQCAACHLRAKGLASYMANKQQVILNLKQKVGLA</sequence>
<organism>
    <name type="scientific">Yersinia pestis bv. Antiqua (strain Angola)</name>
    <dbReference type="NCBI Taxonomy" id="349746"/>
    <lineage>
        <taxon>Bacteria</taxon>
        <taxon>Pseudomonadati</taxon>
        <taxon>Pseudomonadota</taxon>
        <taxon>Gammaproteobacteria</taxon>
        <taxon>Enterobacterales</taxon>
        <taxon>Yersiniaceae</taxon>
        <taxon>Yersinia</taxon>
    </lineage>
</organism>